<evidence type="ECO:0000255" key="1">
    <source>
        <dbReference type="HAMAP-Rule" id="MF_03147"/>
    </source>
</evidence>
<evidence type="ECO:0000256" key="2">
    <source>
        <dbReference type="SAM" id="MobiDB-lite"/>
    </source>
</evidence>
<feature type="chain" id="PRO_0000413226" description="Glutamyl-tRNA(Gln) amidotransferase subunit B-2, chloroplastic/mitochondrial">
    <location>
        <begin position="1"/>
        <end position="580"/>
    </location>
</feature>
<feature type="region of interest" description="Disordered" evidence="2">
    <location>
        <begin position="20"/>
        <end position="64"/>
    </location>
</feature>
<feature type="compositionally biased region" description="Low complexity" evidence="2">
    <location>
        <begin position="20"/>
        <end position="35"/>
    </location>
</feature>
<feature type="compositionally biased region" description="Low complexity" evidence="2">
    <location>
        <begin position="42"/>
        <end position="59"/>
    </location>
</feature>
<sequence>MSRLARDAAAALRRGLLATRRDATAAASTSAATVSRGRRARAVSTTTTTSSSSSSSAAVDARDADADAADEDAWETVVGLELHAQVAADTKLFSGAARQYGARVNANVAPFDAALPGSLPSVNARAVELATRLGVALGGEIHRASRFERKHYAYPDLPHGYQITQRRDPIVRGGRIDVDVGAGATRRLRIEQIQLEMDTGKSVNKTGGGGGGTTTTTIDLNRAGCALVEIVTRPDLRGGEEAAAAAEAFQKTLRFLGVGDANMEEGSLRVDVNVSVRRRGDGGDDGAALGERCEVKNLNSFRSIASAVRFEARRHRELIARGENVERETRSFDPANGETAPLRREQTLDYRFTPEPDVPPIVLSDEYVAAIARDTPELPDVAIRRLADVRGDHALPLKLATAVATHASTARYYEAALSAAKRSAAPRDVDVDAAAVARFVVGELTGEVKRASVAGRVEPLLGLPARLSPERVGELLAAVAAGETTARMAKARPMGWRDVVDALFPPVGDGEGGGEGGGDAAVEAMCRDIVCGMPEEVALFKAGKTRLMGKFVGEAMRRTNGRADPKVVSRALTRALSEEV</sequence>
<keyword id="KW-0067">ATP-binding</keyword>
<keyword id="KW-0150">Chloroplast</keyword>
<keyword id="KW-0436">Ligase</keyword>
<keyword id="KW-0496">Mitochondrion</keyword>
<keyword id="KW-0547">Nucleotide-binding</keyword>
<keyword id="KW-0934">Plastid</keyword>
<keyword id="KW-0648">Protein biosynthesis</keyword>
<keyword id="KW-1185">Reference proteome</keyword>
<organism>
    <name type="scientific">Micromonas pusilla (strain CCMP1545)</name>
    <name type="common">Picoplanktonic green alga</name>
    <dbReference type="NCBI Taxonomy" id="564608"/>
    <lineage>
        <taxon>Eukaryota</taxon>
        <taxon>Viridiplantae</taxon>
        <taxon>Chlorophyta</taxon>
        <taxon>Mamiellophyceae</taxon>
        <taxon>Mamiellales</taxon>
        <taxon>Mamiellaceae</taxon>
        <taxon>Micromonas</taxon>
    </lineage>
</organism>
<accession>C1N138</accession>
<name>GATB2_MICPC</name>
<proteinExistence type="inferred from homology"/>
<gene>
    <name evidence="1" type="primary">GATB-2</name>
    <name type="ORF">MICPUCDRAFT_20618</name>
</gene>
<protein>
    <recommendedName>
        <fullName>Glutamyl-tRNA(Gln) amidotransferase subunit B-2, chloroplastic/mitochondrial</fullName>
        <shortName evidence="1">Glu-AdT subunit B-2</shortName>
        <ecNumber evidence="1">6.3.5.-</ecNumber>
    </recommendedName>
</protein>
<comment type="function">
    <text evidence="1">Allows the formation of correctly charged Gln-tRNA(Gln) through the transamidation of misacylated Glu-tRNA(Gln) in chloroplasts and mitochondria. The reaction takes place in the presence of glutamine and ATP through an activated gamma-phospho-Glu-tRNA(Gln).</text>
</comment>
<comment type="catalytic activity">
    <reaction evidence="1">
        <text>L-glutamyl-tRNA(Gln) + L-glutamine + ATP + H2O = L-glutaminyl-tRNA(Gln) + L-glutamate + ADP + phosphate + H(+)</text>
        <dbReference type="Rhea" id="RHEA:17521"/>
        <dbReference type="Rhea" id="RHEA-COMP:9681"/>
        <dbReference type="Rhea" id="RHEA-COMP:9684"/>
        <dbReference type="ChEBI" id="CHEBI:15377"/>
        <dbReference type="ChEBI" id="CHEBI:15378"/>
        <dbReference type="ChEBI" id="CHEBI:29985"/>
        <dbReference type="ChEBI" id="CHEBI:30616"/>
        <dbReference type="ChEBI" id="CHEBI:43474"/>
        <dbReference type="ChEBI" id="CHEBI:58359"/>
        <dbReference type="ChEBI" id="CHEBI:78520"/>
        <dbReference type="ChEBI" id="CHEBI:78521"/>
        <dbReference type="ChEBI" id="CHEBI:456216"/>
    </reaction>
</comment>
<comment type="subunit">
    <text evidence="1">Subunit of the heterotrimeric GatCAB amidotransferase (AdT) complex, composed of A, B and C subunits.</text>
</comment>
<comment type="subcellular location">
    <subcellularLocation>
        <location evidence="1">Mitochondrion</location>
    </subcellularLocation>
    <subcellularLocation>
        <location evidence="1">Plastid</location>
        <location evidence="1">Chloroplast</location>
    </subcellularLocation>
</comment>
<comment type="miscellaneous">
    <text evidence="1">This protein may be expected to contain an N-terminal transit peptide but none has been predicted.</text>
</comment>
<comment type="similarity">
    <text evidence="1">Belongs to the GatB/GatE family. GatB subfamily.</text>
</comment>
<dbReference type="EC" id="6.3.5.-" evidence="1"/>
<dbReference type="EMBL" id="GG663744">
    <property type="protein sequence ID" value="EEH54133.1"/>
    <property type="molecule type" value="Genomic_DNA"/>
</dbReference>
<dbReference type="RefSeq" id="XP_003061503.1">
    <property type="nucleotide sequence ID" value="XM_003061457.1"/>
</dbReference>
<dbReference type="SMR" id="C1N138"/>
<dbReference type="STRING" id="564608.C1N138"/>
<dbReference type="GeneID" id="9687181"/>
<dbReference type="KEGG" id="mpp:MICPUCDRAFT_20618"/>
<dbReference type="eggNOG" id="KOG2438">
    <property type="taxonomic scope" value="Eukaryota"/>
</dbReference>
<dbReference type="OMA" id="VGDANME"/>
<dbReference type="OrthoDB" id="495931at2759"/>
<dbReference type="Proteomes" id="UP000001876">
    <property type="component" value="Unassembled WGS sequence"/>
</dbReference>
<dbReference type="GO" id="GO:0009507">
    <property type="term" value="C:chloroplast"/>
    <property type="evidence" value="ECO:0007669"/>
    <property type="project" value="UniProtKB-SubCell"/>
</dbReference>
<dbReference type="GO" id="GO:0030956">
    <property type="term" value="C:glutamyl-tRNA(Gln) amidotransferase complex"/>
    <property type="evidence" value="ECO:0007669"/>
    <property type="project" value="UniProtKB-UniRule"/>
</dbReference>
<dbReference type="GO" id="GO:0005739">
    <property type="term" value="C:mitochondrion"/>
    <property type="evidence" value="ECO:0007669"/>
    <property type="project" value="UniProtKB-SubCell"/>
</dbReference>
<dbReference type="GO" id="GO:0005524">
    <property type="term" value="F:ATP binding"/>
    <property type="evidence" value="ECO:0007669"/>
    <property type="project" value="UniProtKB-KW"/>
</dbReference>
<dbReference type="GO" id="GO:0050567">
    <property type="term" value="F:glutaminyl-tRNA synthase (glutamine-hydrolyzing) activity"/>
    <property type="evidence" value="ECO:0007669"/>
    <property type="project" value="UniProtKB-UniRule"/>
</dbReference>
<dbReference type="GO" id="GO:0070681">
    <property type="term" value="P:glutaminyl-tRNAGln biosynthesis via transamidation"/>
    <property type="evidence" value="ECO:0007669"/>
    <property type="project" value="UniProtKB-UniRule"/>
</dbReference>
<dbReference type="GO" id="GO:0032543">
    <property type="term" value="P:mitochondrial translation"/>
    <property type="evidence" value="ECO:0007669"/>
    <property type="project" value="UniProtKB-UniRule"/>
</dbReference>
<dbReference type="FunFam" id="1.10.10.410:FF:000001">
    <property type="entry name" value="Aspartyl/glutamyl-tRNA(Asn/Gln) amidotransferase subunit B"/>
    <property type="match status" value="1"/>
</dbReference>
<dbReference type="Gene3D" id="1.10.10.410">
    <property type="match status" value="1"/>
</dbReference>
<dbReference type="HAMAP" id="MF_00121">
    <property type="entry name" value="GatB"/>
    <property type="match status" value="1"/>
</dbReference>
<dbReference type="InterPro" id="IPR017959">
    <property type="entry name" value="Asn/Gln-tRNA_amidoTrfase_suB/E"/>
</dbReference>
<dbReference type="InterPro" id="IPR006075">
    <property type="entry name" value="Asn/Gln-tRNA_Trfase_suB/E_cat"/>
</dbReference>
<dbReference type="InterPro" id="IPR018027">
    <property type="entry name" value="Asn/Gln_amidotransferase"/>
</dbReference>
<dbReference type="InterPro" id="IPR003789">
    <property type="entry name" value="Asn/Gln_tRNA_amidoTrase-B-like"/>
</dbReference>
<dbReference type="InterPro" id="IPR004413">
    <property type="entry name" value="GatB"/>
</dbReference>
<dbReference type="InterPro" id="IPR023168">
    <property type="entry name" value="GatB_Yqey_C_2"/>
</dbReference>
<dbReference type="InterPro" id="IPR017958">
    <property type="entry name" value="Gln-tRNA_amidoTrfase_suB_CS"/>
</dbReference>
<dbReference type="InterPro" id="IPR014746">
    <property type="entry name" value="Gln_synth/guanido_kin_cat_dom"/>
</dbReference>
<dbReference type="NCBIfam" id="TIGR00133">
    <property type="entry name" value="gatB"/>
    <property type="match status" value="1"/>
</dbReference>
<dbReference type="NCBIfam" id="NF004012">
    <property type="entry name" value="PRK05477.1-2"/>
    <property type="match status" value="1"/>
</dbReference>
<dbReference type="PANTHER" id="PTHR11659">
    <property type="entry name" value="GLUTAMYL-TRNA GLN AMIDOTRANSFERASE SUBUNIT B MITOCHONDRIAL AND PROKARYOTIC PET112-RELATED"/>
    <property type="match status" value="1"/>
</dbReference>
<dbReference type="PANTHER" id="PTHR11659:SF0">
    <property type="entry name" value="GLUTAMYL-TRNA(GLN) AMIDOTRANSFERASE SUBUNIT B, MITOCHONDRIAL"/>
    <property type="match status" value="1"/>
</dbReference>
<dbReference type="Pfam" id="PF02934">
    <property type="entry name" value="GatB_N"/>
    <property type="match status" value="1"/>
</dbReference>
<dbReference type="Pfam" id="PF02637">
    <property type="entry name" value="GatB_Yqey"/>
    <property type="match status" value="1"/>
</dbReference>
<dbReference type="SMART" id="SM00845">
    <property type="entry name" value="GatB_Yqey"/>
    <property type="match status" value="1"/>
</dbReference>
<dbReference type="SUPFAM" id="SSF89095">
    <property type="entry name" value="GatB/YqeY motif"/>
    <property type="match status" value="1"/>
</dbReference>
<dbReference type="SUPFAM" id="SSF55931">
    <property type="entry name" value="Glutamine synthetase/guanido kinase"/>
    <property type="match status" value="1"/>
</dbReference>
<dbReference type="PROSITE" id="PS01234">
    <property type="entry name" value="GATB"/>
    <property type="match status" value="1"/>
</dbReference>
<reference key="1">
    <citation type="journal article" date="2009" name="Science">
        <title>Green evolution and dynamic adaptations revealed by genomes of the marine picoeukaryotes Micromonas.</title>
        <authorList>
            <person name="Worden A.Z."/>
            <person name="Lee J.H."/>
            <person name="Mock T."/>
            <person name="Rouze P."/>
            <person name="Simmons M.P."/>
            <person name="Aerts A.L."/>
            <person name="Allen A.E."/>
            <person name="Cuvelier M.L."/>
            <person name="Derelle E."/>
            <person name="Everett M.V."/>
            <person name="Foulon E."/>
            <person name="Grimwood J."/>
            <person name="Gundlach H."/>
            <person name="Henrissat B."/>
            <person name="Napoli C."/>
            <person name="McDonald S.M."/>
            <person name="Parker M.S."/>
            <person name="Rombauts S."/>
            <person name="Salamov A."/>
            <person name="Von Dassow P."/>
            <person name="Badger J.H."/>
            <person name="Coutinho P.M."/>
            <person name="Demir E."/>
            <person name="Dubchak I."/>
            <person name="Gentemann C."/>
            <person name="Eikrem W."/>
            <person name="Gready J.E."/>
            <person name="John U."/>
            <person name="Lanier W."/>
            <person name="Lindquist E.A."/>
            <person name="Lucas S."/>
            <person name="Mayer K.F."/>
            <person name="Moreau H."/>
            <person name="Not F."/>
            <person name="Otillar R."/>
            <person name="Panaud O."/>
            <person name="Pangilinan J."/>
            <person name="Paulsen I."/>
            <person name="Piegu B."/>
            <person name="Poliakov A."/>
            <person name="Robbens S."/>
            <person name="Schmutz J."/>
            <person name="Toulza E."/>
            <person name="Wyss T."/>
            <person name="Zelensky A."/>
            <person name="Zhou K."/>
            <person name="Armbrust E.V."/>
            <person name="Bhattacharya D."/>
            <person name="Goodenough U.W."/>
            <person name="Van de Peer Y."/>
            <person name="Grigoriev I.V."/>
        </authorList>
    </citation>
    <scope>NUCLEOTIDE SEQUENCE [LARGE SCALE GENOMIC DNA]</scope>
    <source>
        <strain>CCMP1545</strain>
    </source>
</reference>